<protein>
    <recommendedName>
        <fullName evidence="1">Small ribosomal subunit protein uS4</fullName>
    </recommendedName>
    <alternativeName>
        <fullName evidence="2">30S ribosomal protein S4</fullName>
    </alternativeName>
</protein>
<sequence>MARYLGPKLKLSRREGTDLFLKSGVRAIDSKCKIDTAPGQHGARKPRLSDYGSQLREKQKVRRIYGILERQFRNYYKEANRLKGNTGENLLVLLEGRLDNVVYRMGFAATRAEARQLVSHKAIVVNGRVVNIPSFQVSVNDVVAIREKSKKQARIKASLELAEQREKPTWLEVDSAKMEGVFKRVPERSDLSADINEHLIVELYSK</sequence>
<gene>
    <name evidence="1" type="primary">rpsD</name>
    <name type="ordered locus">CGSHiEE_08055</name>
</gene>
<accession>A5UDS3</accession>
<feature type="chain" id="PRO_0000322303" description="Small ribosomal subunit protein uS4">
    <location>
        <begin position="1"/>
        <end position="206"/>
    </location>
</feature>
<feature type="domain" description="S4 RNA-binding" evidence="1">
    <location>
        <begin position="96"/>
        <end position="156"/>
    </location>
</feature>
<organism>
    <name type="scientific">Haemophilus influenzae (strain PittEE)</name>
    <dbReference type="NCBI Taxonomy" id="374930"/>
    <lineage>
        <taxon>Bacteria</taxon>
        <taxon>Pseudomonadati</taxon>
        <taxon>Pseudomonadota</taxon>
        <taxon>Gammaproteobacteria</taxon>
        <taxon>Pasteurellales</taxon>
        <taxon>Pasteurellaceae</taxon>
        <taxon>Haemophilus</taxon>
    </lineage>
</organism>
<reference key="1">
    <citation type="journal article" date="2007" name="Genome Biol.">
        <title>Characterization and modeling of the Haemophilus influenzae core and supragenomes based on the complete genomic sequences of Rd and 12 clinical nontypeable strains.</title>
        <authorList>
            <person name="Hogg J.S."/>
            <person name="Hu F.Z."/>
            <person name="Janto B."/>
            <person name="Boissy R."/>
            <person name="Hayes J."/>
            <person name="Keefe R."/>
            <person name="Post J.C."/>
            <person name="Ehrlich G.D."/>
        </authorList>
    </citation>
    <scope>NUCLEOTIDE SEQUENCE [LARGE SCALE GENOMIC DNA]</scope>
    <source>
        <strain>PittEE</strain>
    </source>
</reference>
<keyword id="KW-0687">Ribonucleoprotein</keyword>
<keyword id="KW-0689">Ribosomal protein</keyword>
<keyword id="KW-0694">RNA-binding</keyword>
<keyword id="KW-0699">rRNA-binding</keyword>
<dbReference type="EMBL" id="CP000671">
    <property type="protein sequence ID" value="ABQ98924.1"/>
    <property type="molecule type" value="Genomic_DNA"/>
</dbReference>
<dbReference type="SMR" id="A5UDS3"/>
<dbReference type="KEGG" id="hip:CGSHiEE_08055"/>
<dbReference type="HOGENOM" id="CLU_092403_0_2_6"/>
<dbReference type="GO" id="GO:0015935">
    <property type="term" value="C:small ribosomal subunit"/>
    <property type="evidence" value="ECO:0007669"/>
    <property type="project" value="InterPro"/>
</dbReference>
<dbReference type="GO" id="GO:0019843">
    <property type="term" value="F:rRNA binding"/>
    <property type="evidence" value="ECO:0007669"/>
    <property type="project" value="UniProtKB-UniRule"/>
</dbReference>
<dbReference type="GO" id="GO:0003735">
    <property type="term" value="F:structural constituent of ribosome"/>
    <property type="evidence" value="ECO:0007669"/>
    <property type="project" value="InterPro"/>
</dbReference>
<dbReference type="GO" id="GO:0042274">
    <property type="term" value="P:ribosomal small subunit biogenesis"/>
    <property type="evidence" value="ECO:0007669"/>
    <property type="project" value="TreeGrafter"/>
</dbReference>
<dbReference type="GO" id="GO:0006412">
    <property type="term" value="P:translation"/>
    <property type="evidence" value="ECO:0007669"/>
    <property type="project" value="UniProtKB-UniRule"/>
</dbReference>
<dbReference type="CDD" id="cd00165">
    <property type="entry name" value="S4"/>
    <property type="match status" value="1"/>
</dbReference>
<dbReference type="FunFam" id="1.10.1050.10:FF:000001">
    <property type="entry name" value="30S ribosomal protein S4"/>
    <property type="match status" value="1"/>
</dbReference>
<dbReference type="FunFam" id="3.10.290.10:FF:000001">
    <property type="entry name" value="30S ribosomal protein S4"/>
    <property type="match status" value="1"/>
</dbReference>
<dbReference type="Gene3D" id="1.10.1050.10">
    <property type="entry name" value="Ribosomal Protein S4 Delta 41, Chain A, domain 1"/>
    <property type="match status" value="1"/>
</dbReference>
<dbReference type="Gene3D" id="3.10.290.10">
    <property type="entry name" value="RNA-binding S4 domain"/>
    <property type="match status" value="1"/>
</dbReference>
<dbReference type="HAMAP" id="MF_01306_B">
    <property type="entry name" value="Ribosomal_uS4_B"/>
    <property type="match status" value="1"/>
</dbReference>
<dbReference type="InterPro" id="IPR022801">
    <property type="entry name" value="Ribosomal_uS4"/>
</dbReference>
<dbReference type="InterPro" id="IPR005709">
    <property type="entry name" value="Ribosomal_uS4_bac-type"/>
</dbReference>
<dbReference type="InterPro" id="IPR018079">
    <property type="entry name" value="Ribosomal_uS4_CS"/>
</dbReference>
<dbReference type="InterPro" id="IPR001912">
    <property type="entry name" value="Ribosomal_uS4_N"/>
</dbReference>
<dbReference type="InterPro" id="IPR002942">
    <property type="entry name" value="S4_RNA-bd"/>
</dbReference>
<dbReference type="InterPro" id="IPR036986">
    <property type="entry name" value="S4_RNA-bd_sf"/>
</dbReference>
<dbReference type="NCBIfam" id="NF003717">
    <property type="entry name" value="PRK05327.1"/>
    <property type="match status" value="1"/>
</dbReference>
<dbReference type="NCBIfam" id="TIGR01017">
    <property type="entry name" value="rpsD_bact"/>
    <property type="match status" value="1"/>
</dbReference>
<dbReference type="PANTHER" id="PTHR11831">
    <property type="entry name" value="30S 40S RIBOSOMAL PROTEIN"/>
    <property type="match status" value="1"/>
</dbReference>
<dbReference type="PANTHER" id="PTHR11831:SF4">
    <property type="entry name" value="SMALL RIBOSOMAL SUBUNIT PROTEIN US4M"/>
    <property type="match status" value="1"/>
</dbReference>
<dbReference type="Pfam" id="PF00163">
    <property type="entry name" value="Ribosomal_S4"/>
    <property type="match status" value="1"/>
</dbReference>
<dbReference type="Pfam" id="PF01479">
    <property type="entry name" value="S4"/>
    <property type="match status" value="1"/>
</dbReference>
<dbReference type="SMART" id="SM01390">
    <property type="entry name" value="Ribosomal_S4"/>
    <property type="match status" value="1"/>
</dbReference>
<dbReference type="SMART" id="SM00363">
    <property type="entry name" value="S4"/>
    <property type="match status" value="1"/>
</dbReference>
<dbReference type="SUPFAM" id="SSF55174">
    <property type="entry name" value="Alpha-L RNA-binding motif"/>
    <property type="match status" value="1"/>
</dbReference>
<dbReference type="PROSITE" id="PS00632">
    <property type="entry name" value="RIBOSOMAL_S4"/>
    <property type="match status" value="1"/>
</dbReference>
<dbReference type="PROSITE" id="PS50889">
    <property type="entry name" value="S4"/>
    <property type="match status" value="1"/>
</dbReference>
<comment type="function">
    <text evidence="1">One of the primary rRNA binding proteins, it binds directly to 16S rRNA where it nucleates assembly of the body of the 30S subunit.</text>
</comment>
<comment type="function">
    <text evidence="1">With S5 and S12 plays an important role in translational accuracy.</text>
</comment>
<comment type="subunit">
    <text evidence="1">Part of the 30S ribosomal subunit. Contacts protein S5. The interaction surface between S4 and S5 is involved in control of translational fidelity.</text>
</comment>
<comment type="similarity">
    <text evidence="1">Belongs to the universal ribosomal protein uS4 family.</text>
</comment>
<proteinExistence type="inferred from homology"/>
<name>RS4_HAEIE</name>
<evidence type="ECO:0000255" key="1">
    <source>
        <dbReference type="HAMAP-Rule" id="MF_01306"/>
    </source>
</evidence>
<evidence type="ECO:0000305" key="2"/>